<organism>
    <name type="scientific">Streptococcus pneumoniae serotype 2 (strain D39 / NCTC 7466)</name>
    <dbReference type="NCBI Taxonomy" id="373153"/>
    <lineage>
        <taxon>Bacteria</taxon>
        <taxon>Bacillati</taxon>
        <taxon>Bacillota</taxon>
        <taxon>Bacilli</taxon>
        <taxon>Lactobacillales</taxon>
        <taxon>Streptococcaceae</taxon>
        <taxon>Streptococcus</taxon>
    </lineage>
</organism>
<proteinExistence type="inferred from homology"/>
<protein>
    <recommendedName>
        <fullName evidence="1">ATP synthase subunit delta</fullName>
    </recommendedName>
    <alternativeName>
        <fullName evidence="1">ATP synthase F(1) sector subunit delta</fullName>
    </alternativeName>
    <alternativeName>
        <fullName evidence="1">F-type ATPase subunit delta</fullName>
        <shortName evidence="1">F-ATPase subunit delta</shortName>
    </alternativeName>
</protein>
<sequence length="178" mass="20541">MDKKTVKVIEKYSMPFVQLVLEKGEEDRIFSDLTQIKQVVEKTGLPSFLKQVAVDESDKEKTIAFFQDSVSPLLQNFIQVLAYNHRANLFYDVLVDCLNRLEKETNRFEVTITSAHPLTDEQKTRLLPLIEKKMSLKVRSVKEQIDESLIGGFVIFANHKTIDVSIKQQLKVVKENLK</sequence>
<comment type="function">
    <text evidence="1">F(1)F(0) ATP synthase produces ATP from ADP in the presence of a proton or sodium gradient. F-type ATPases consist of two structural domains, F(1) containing the extramembraneous catalytic core and F(0) containing the membrane proton channel, linked together by a central stalk and a peripheral stalk. During catalysis, ATP synthesis in the catalytic domain of F(1) is coupled via a rotary mechanism of the central stalk subunits to proton translocation.</text>
</comment>
<comment type="function">
    <text evidence="1">This protein is part of the stalk that links CF(0) to CF(1). It either transmits conformational changes from CF(0) to CF(1) or is implicated in proton conduction.</text>
</comment>
<comment type="subunit">
    <text evidence="1">F-type ATPases have 2 components, F(1) - the catalytic core - and F(0) - the membrane proton channel. F(1) has five subunits: alpha(3), beta(3), gamma(1), delta(1), epsilon(1). F(0) has three main subunits: a(1), b(2) and c(10-14). The alpha and beta chains form an alternating ring which encloses part of the gamma chain. F(1) is attached to F(0) by a central stalk formed by the gamma and epsilon chains, while a peripheral stalk is formed by the delta and b chains.</text>
</comment>
<comment type="subcellular location">
    <subcellularLocation>
        <location evidence="1">Cell membrane</location>
        <topology evidence="1">Peripheral membrane protein</topology>
    </subcellularLocation>
</comment>
<comment type="similarity">
    <text evidence="1">Belongs to the ATPase delta chain family.</text>
</comment>
<accession>Q04HT6</accession>
<name>ATPD_STRP2</name>
<gene>
    <name evidence="1" type="primary">atpH</name>
    <name type="ordered locus">SPD_1338</name>
</gene>
<keyword id="KW-0066">ATP synthesis</keyword>
<keyword id="KW-1003">Cell membrane</keyword>
<keyword id="KW-0139">CF(1)</keyword>
<keyword id="KW-0375">Hydrogen ion transport</keyword>
<keyword id="KW-0406">Ion transport</keyword>
<keyword id="KW-0472">Membrane</keyword>
<keyword id="KW-1185">Reference proteome</keyword>
<keyword id="KW-0813">Transport</keyword>
<evidence type="ECO:0000255" key="1">
    <source>
        <dbReference type="HAMAP-Rule" id="MF_01416"/>
    </source>
</evidence>
<reference key="1">
    <citation type="journal article" date="2007" name="J. Bacteriol.">
        <title>Genome sequence of Avery's virulent serotype 2 strain D39 of Streptococcus pneumoniae and comparison with that of unencapsulated laboratory strain R6.</title>
        <authorList>
            <person name="Lanie J.A."/>
            <person name="Ng W.-L."/>
            <person name="Kazmierczak K.M."/>
            <person name="Andrzejewski T.M."/>
            <person name="Davidsen T.M."/>
            <person name="Wayne K.J."/>
            <person name="Tettelin H."/>
            <person name="Glass J.I."/>
            <person name="Winkler M.E."/>
        </authorList>
    </citation>
    <scope>NUCLEOTIDE SEQUENCE [LARGE SCALE GENOMIC DNA]</scope>
    <source>
        <strain>D39 / NCTC 7466</strain>
    </source>
</reference>
<dbReference type="EMBL" id="CP000410">
    <property type="protein sequence ID" value="ABJ54439.1"/>
    <property type="molecule type" value="Genomic_DNA"/>
</dbReference>
<dbReference type="RefSeq" id="WP_000359036.1">
    <property type="nucleotide sequence ID" value="NZ_JAMLJR010000008.1"/>
</dbReference>
<dbReference type="SMR" id="Q04HT6"/>
<dbReference type="PaxDb" id="373153-SPD_1338"/>
<dbReference type="KEGG" id="spd:SPD_1338"/>
<dbReference type="eggNOG" id="COG0712">
    <property type="taxonomic scope" value="Bacteria"/>
</dbReference>
<dbReference type="HOGENOM" id="CLU_085114_1_2_9"/>
<dbReference type="BioCyc" id="SPNE373153:G1G6V-1443-MONOMER"/>
<dbReference type="Proteomes" id="UP000001452">
    <property type="component" value="Chromosome"/>
</dbReference>
<dbReference type="GO" id="GO:0005886">
    <property type="term" value="C:plasma membrane"/>
    <property type="evidence" value="ECO:0007669"/>
    <property type="project" value="UniProtKB-SubCell"/>
</dbReference>
<dbReference type="GO" id="GO:0045259">
    <property type="term" value="C:proton-transporting ATP synthase complex"/>
    <property type="evidence" value="ECO:0007669"/>
    <property type="project" value="UniProtKB-KW"/>
</dbReference>
<dbReference type="GO" id="GO:0046933">
    <property type="term" value="F:proton-transporting ATP synthase activity, rotational mechanism"/>
    <property type="evidence" value="ECO:0007669"/>
    <property type="project" value="UniProtKB-UniRule"/>
</dbReference>
<dbReference type="Gene3D" id="1.10.520.20">
    <property type="entry name" value="N-terminal domain of the delta subunit of the F1F0-ATP synthase"/>
    <property type="match status" value="1"/>
</dbReference>
<dbReference type="HAMAP" id="MF_01416">
    <property type="entry name" value="ATP_synth_delta_bact"/>
    <property type="match status" value="1"/>
</dbReference>
<dbReference type="InterPro" id="IPR026015">
    <property type="entry name" value="ATP_synth_OSCP/delta_N_sf"/>
</dbReference>
<dbReference type="InterPro" id="IPR000711">
    <property type="entry name" value="ATPase_OSCP/dsu"/>
</dbReference>
<dbReference type="NCBIfam" id="TIGR01145">
    <property type="entry name" value="ATP_synt_delta"/>
    <property type="match status" value="1"/>
</dbReference>
<dbReference type="NCBIfam" id="NF004401">
    <property type="entry name" value="PRK05758.2-1"/>
    <property type="match status" value="1"/>
</dbReference>
<dbReference type="PANTHER" id="PTHR11910">
    <property type="entry name" value="ATP SYNTHASE DELTA CHAIN"/>
    <property type="match status" value="1"/>
</dbReference>
<dbReference type="Pfam" id="PF00213">
    <property type="entry name" value="OSCP"/>
    <property type="match status" value="1"/>
</dbReference>
<dbReference type="PRINTS" id="PR00125">
    <property type="entry name" value="ATPASEDELTA"/>
</dbReference>
<dbReference type="SUPFAM" id="SSF47928">
    <property type="entry name" value="N-terminal domain of the delta subunit of the F1F0-ATP synthase"/>
    <property type="match status" value="1"/>
</dbReference>
<feature type="chain" id="PRO_0000371156" description="ATP synthase subunit delta">
    <location>
        <begin position="1"/>
        <end position="178"/>
    </location>
</feature>